<comment type="function">
    <text evidence="1">Channel that opens in response to stretch forces in the membrane lipid bilayer. May participate in the regulation of osmotic pressure changes within the cell.</text>
</comment>
<comment type="subunit">
    <text evidence="1">Homopentamer.</text>
</comment>
<comment type="subcellular location">
    <subcellularLocation>
        <location evidence="1">Cell inner membrane</location>
        <topology evidence="1">Multi-pass membrane protein</topology>
    </subcellularLocation>
</comment>
<comment type="similarity">
    <text evidence="1">Belongs to the MscL family.</text>
</comment>
<evidence type="ECO:0000255" key="1">
    <source>
        <dbReference type="HAMAP-Rule" id="MF_00115"/>
    </source>
</evidence>
<protein>
    <recommendedName>
        <fullName evidence="1">Large-conductance mechanosensitive channel</fullName>
    </recommendedName>
</protein>
<proteinExistence type="inferred from homology"/>
<gene>
    <name evidence="1" type="primary">mscL</name>
    <name type="ordered locus">ACICU_03082</name>
</gene>
<organism>
    <name type="scientific">Acinetobacter baumannii (strain ACICU)</name>
    <dbReference type="NCBI Taxonomy" id="405416"/>
    <lineage>
        <taxon>Bacteria</taxon>
        <taxon>Pseudomonadati</taxon>
        <taxon>Pseudomonadota</taxon>
        <taxon>Gammaproteobacteria</taxon>
        <taxon>Moraxellales</taxon>
        <taxon>Moraxellaceae</taxon>
        <taxon>Acinetobacter</taxon>
        <taxon>Acinetobacter calcoaceticus/baumannii complex</taxon>
    </lineage>
</organism>
<keyword id="KW-0997">Cell inner membrane</keyword>
<keyword id="KW-1003">Cell membrane</keyword>
<keyword id="KW-0407">Ion channel</keyword>
<keyword id="KW-0406">Ion transport</keyword>
<keyword id="KW-0472">Membrane</keyword>
<keyword id="KW-0812">Transmembrane</keyword>
<keyword id="KW-1133">Transmembrane helix</keyword>
<keyword id="KW-0813">Transport</keyword>
<accession>B2HYF5</accession>
<sequence>MSIIQEFKEFAIKGNMMDLAIGVIIGGAFGKIVDSLVKDIIMPLITVITGGGVDFSQKFIVLGANPNNLQSLDALQKAGINVLTYGNFLTILINFLILAWVVFLMVKLLNKLRRDKNEPEAPAATPEDIQLLREIRDELKKQA</sequence>
<reference key="1">
    <citation type="journal article" date="2008" name="Antimicrob. Agents Chemother.">
        <title>Whole-genome pyrosequencing of an epidemic multidrug-resistant Acinetobacter baumannii strain belonging to the European clone II group.</title>
        <authorList>
            <person name="Iacono M."/>
            <person name="Villa L."/>
            <person name="Fortini D."/>
            <person name="Bordoni R."/>
            <person name="Imperi F."/>
            <person name="Bonnal R.J."/>
            <person name="Sicheritz-Ponten T."/>
            <person name="De Bellis G."/>
            <person name="Visca P."/>
            <person name="Cassone A."/>
            <person name="Carattoli A."/>
        </authorList>
    </citation>
    <scope>NUCLEOTIDE SEQUENCE [LARGE SCALE GENOMIC DNA]</scope>
    <source>
        <strain>ACICU</strain>
    </source>
</reference>
<feature type="chain" id="PRO_1000094870" description="Large-conductance mechanosensitive channel">
    <location>
        <begin position="1"/>
        <end position="143"/>
    </location>
</feature>
<feature type="transmembrane region" description="Helical" evidence="1">
    <location>
        <begin position="10"/>
        <end position="30"/>
    </location>
</feature>
<feature type="transmembrane region" description="Helical" evidence="1">
    <location>
        <begin position="40"/>
        <end position="60"/>
    </location>
</feature>
<feature type="transmembrane region" description="Helical" evidence="1">
    <location>
        <begin position="86"/>
        <end position="106"/>
    </location>
</feature>
<name>MSCL_ACIBC</name>
<dbReference type="EMBL" id="CP000863">
    <property type="protein sequence ID" value="ACC58394.1"/>
    <property type="molecule type" value="Genomic_DNA"/>
</dbReference>
<dbReference type="RefSeq" id="WP_000022555.1">
    <property type="nucleotide sequence ID" value="NZ_CP031380.1"/>
</dbReference>
<dbReference type="SMR" id="B2HYF5"/>
<dbReference type="GeneID" id="92895113"/>
<dbReference type="KEGG" id="abc:ACICU_03082"/>
<dbReference type="HOGENOM" id="CLU_095787_0_1_6"/>
<dbReference type="Proteomes" id="UP000008839">
    <property type="component" value="Chromosome"/>
</dbReference>
<dbReference type="GO" id="GO:0005886">
    <property type="term" value="C:plasma membrane"/>
    <property type="evidence" value="ECO:0007669"/>
    <property type="project" value="UniProtKB-SubCell"/>
</dbReference>
<dbReference type="GO" id="GO:0008381">
    <property type="term" value="F:mechanosensitive monoatomic ion channel activity"/>
    <property type="evidence" value="ECO:0007669"/>
    <property type="project" value="UniProtKB-UniRule"/>
</dbReference>
<dbReference type="Gene3D" id="1.10.1200.120">
    <property type="entry name" value="Large-conductance mechanosensitive channel, MscL, domain 1"/>
    <property type="match status" value="1"/>
</dbReference>
<dbReference type="HAMAP" id="MF_00115">
    <property type="entry name" value="MscL"/>
    <property type="match status" value="1"/>
</dbReference>
<dbReference type="InterPro" id="IPR019823">
    <property type="entry name" value="Mechanosensitive_channel_CS"/>
</dbReference>
<dbReference type="InterPro" id="IPR001185">
    <property type="entry name" value="MS_channel"/>
</dbReference>
<dbReference type="InterPro" id="IPR037673">
    <property type="entry name" value="MSC/AndL"/>
</dbReference>
<dbReference type="InterPro" id="IPR036019">
    <property type="entry name" value="MscL_channel"/>
</dbReference>
<dbReference type="NCBIfam" id="TIGR00220">
    <property type="entry name" value="mscL"/>
    <property type="match status" value="1"/>
</dbReference>
<dbReference type="NCBIfam" id="NF001843">
    <property type="entry name" value="PRK00567.1-4"/>
    <property type="match status" value="1"/>
</dbReference>
<dbReference type="NCBIfam" id="NF010557">
    <property type="entry name" value="PRK13952.1"/>
    <property type="match status" value="1"/>
</dbReference>
<dbReference type="PANTHER" id="PTHR30266:SF2">
    <property type="entry name" value="LARGE-CONDUCTANCE MECHANOSENSITIVE CHANNEL"/>
    <property type="match status" value="1"/>
</dbReference>
<dbReference type="PANTHER" id="PTHR30266">
    <property type="entry name" value="MECHANOSENSITIVE CHANNEL MSCL"/>
    <property type="match status" value="1"/>
</dbReference>
<dbReference type="Pfam" id="PF01741">
    <property type="entry name" value="MscL"/>
    <property type="match status" value="1"/>
</dbReference>
<dbReference type="PRINTS" id="PR01264">
    <property type="entry name" value="MECHCHANNEL"/>
</dbReference>
<dbReference type="SUPFAM" id="SSF81330">
    <property type="entry name" value="Gated mechanosensitive channel"/>
    <property type="match status" value="1"/>
</dbReference>
<dbReference type="PROSITE" id="PS01327">
    <property type="entry name" value="MSCL"/>
    <property type="match status" value="1"/>
</dbReference>